<name>ISPG_AZOVD</name>
<reference key="1">
    <citation type="journal article" date="2009" name="J. Bacteriol.">
        <title>Genome sequence of Azotobacter vinelandii, an obligate aerobe specialized to support diverse anaerobic metabolic processes.</title>
        <authorList>
            <person name="Setubal J.C."/>
            <person name="Dos Santos P."/>
            <person name="Goldman B.S."/>
            <person name="Ertesvaag H."/>
            <person name="Espin G."/>
            <person name="Rubio L.M."/>
            <person name="Valla S."/>
            <person name="Almeida N.F."/>
            <person name="Balasubramanian D."/>
            <person name="Cromes L."/>
            <person name="Curatti L."/>
            <person name="Du Z."/>
            <person name="Godsy E."/>
            <person name="Goodner B."/>
            <person name="Hellner-Burris K."/>
            <person name="Hernandez J.A."/>
            <person name="Houmiel K."/>
            <person name="Imperial J."/>
            <person name="Kennedy C."/>
            <person name="Larson T.J."/>
            <person name="Latreille P."/>
            <person name="Ligon L.S."/>
            <person name="Lu J."/>
            <person name="Maerk M."/>
            <person name="Miller N.M."/>
            <person name="Norton S."/>
            <person name="O'Carroll I.P."/>
            <person name="Paulsen I."/>
            <person name="Raulfs E.C."/>
            <person name="Roemer R."/>
            <person name="Rosser J."/>
            <person name="Segura D."/>
            <person name="Slater S."/>
            <person name="Stricklin S.L."/>
            <person name="Studholme D.J."/>
            <person name="Sun J."/>
            <person name="Viana C.J."/>
            <person name="Wallin E."/>
            <person name="Wang B."/>
            <person name="Wheeler C."/>
            <person name="Zhu H."/>
            <person name="Dean D.R."/>
            <person name="Dixon R."/>
            <person name="Wood D."/>
        </authorList>
    </citation>
    <scope>NUCLEOTIDE SEQUENCE [LARGE SCALE GENOMIC DNA]</scope>
    <source>
        <strain>DJ / ATCC BAA-1303</strain>
    </source>
</reference>
<proteinExistence type="inferred from homology"/>
<organism>
    <name type="scientific">Azotobacter vinelandii (strain DJ / ATCC BAA-1303)</name>
    <dbReference type="NCBI Taxonomy" id="322710"/>
    <lineage>
        <taxon>Bacteria</taxon>
        <taxon>Pseudomonadati</taxon>
        <taxon>Pseudomonadota</taxon>
        <taxon>Gammaproteobacteria</taxon>
        <taxon>Pseudomonadales</taxon>
        <taxon>Pseudomonadaceae</taxon>
        <taxon>Azotobacter</taxon>
    </lineage>
</organism>
<evidence type="ECO:0000255" key="1">
    <source>
        <dbReference type="HAMAP-Rule" id="MF_00159"/>
    </source>
</evidence>
<sequence length="370" mass="39908">MHSESPIQRRPSRKIWVGPVAVGGDAPISVQSMTNTDTHDVEATVAQIRRLEAAGADIVRVSVPDMDAAEAFGRIKQQVQLPLVADIHFDYQIALRVAELGVDCLRINPGNIGREDRVRAVVDAARDRGIPIRIGVNAGSLEKDLQKKYGEPTPQALVESALRHVEHLDRLDFQNFKVSVKASDVFMAVAAYRLLAGQIEQPLHLGITEAGGLRSGTVKSAVGLGMLLAEGIGDTIRVSLAADPVEEIKVGFDILKSLHLRSRGINFIACPSCSRQNFDVVKTMNELETRLEDLLVPLDVAVIGCVVNGPGEAKEAHVGLTGGTPNNLVYIDGKPAQKLGNENLVDELERLIRRKAAEKAAADASLIVRS</sequence>
<gene>
    <name evidence="1" type="primary">ispG</name>
    <name type="ordered locus">Avin_40290</name>
</gene>
<keyword id="KW-0004">4Fe-4S</keyword>
<keyword id="KW-0408">Iron</keyword>
<keyword id="KW-0411">Iron-sulfur</keyword>
<keyword id="KW-0414">Isoprene biosynthesis</keyword>
<keyword id="KW-0479">Metal-binding</keyword>
<keyword id="KW-0560">Oxidoreductase</keyword>
<comment type="function">
    <text evidence="1">Converts 2C-methyl-D-erythritol 2,4-cyclodiphosphate (ME-2,4cPP) into 1-hydroxy-2-methyl-2-(E)-butenyl 4-diphosphate.</text>
</comment>
<comment type="catalytic activity">
    <reaction evidence="1">
        <text>(2E)-4-hydroxy-3-methylbut-2-enyl diphosphate + oxidized [flavodoxin] + H2O + 2 H(+) = 2-C-methyl-D-erythritol 2,4-cyclic diphosphate + reduced [flavodoxin]</text>
        <dbReference type="Rhea" id="RHEA:43604"/>
        <dbReference type="Rhea" id="RHEA-COMP:10622"/>
        <dbReference type="Rhea" id="RHEA-COMP:10623"/>
        <dbReference type="ChEBI" id="CHEBI:15377"/>
        <dbReference type="ChEBI" id="CHEBI:15378"/>
        <dbReference type="ChEBI" id="CHEBI:57618"/>
        <dbReference type="ChEBI" id="CHEBI:58210"/>
        <dbReference type="ChEBI" id="CHEBI:58483"/>
        <dbReference type="ChEBI" id="CHEBI:128753"/>
        <dbReference type="EC" id="1.17.7.3"/>
    </reaction>
</comment>
<comment type="cofactor">
    <cofactor evidence="1">
        <name>[4Fe-4S] cluster</name>
        <dbReference type="ChEBI" id="CHEBI:49883"/>
    </cofactor>
    <text evidence="1">Binds 1 [4Fe-4S] cluster.</text>
</comment>
<comment type="pathway">
    <text evidence="1">Isoprenoid biosynthesis; isopentenyl diphosphate biosynthesis via DXP pathway; isopentenyl diphosphate from 1-deoxy-D-xylulose 5-phosphate: step 5/6.</text>
</comment>
<comment type="similarity">
    <text evidence="1">Belongs to the IspG family.</text>
</comment>
<protein>
    <recommendedName>
        <fullName evidence="1">4-hydroxy-3-methylbut-2-en-1-yl diphosphate synthase (flavodoxin)</fullName>
        <ecNumber evidence="1">1.17.7.3</ecNumber>
    </recommendedName>
    <alternativeName>
        <fullName evidence="1">1-hydroxy-2-methyl-2-(E)-butenyl 4-diphosphate synthase</fullName>
    </alternativeName>
</protein>
<feature type="chain" id="PRO_1000203500" description="4-hydroxy-3-methylbut-2-en-1-yl diphosphate synthase (flavodoxin)">
    <location>
        <begin position="1"/>
        <end position="370"/>
    </location>
</feature>
<feature type="binding site" evidence="1">
    <location>
        <position position="270"/>
    </location>
    <ligand>
        <name>[4Fe-4S] cluster</name>
        <dbReference type="ChEBI" id="CHEBI:49883"/>
    </ligand>
</feature>
<feature type="binding site" evidence="1">
    <location>
        <position position="273"/>
    </location>
    <ligand>
        <name>[4Fe-4S] cluster</name>
        <dbReference type="ChEBI" id="CHEBI:49883"/>
    </ligand>
</feature>
<feature type="binding site" evidence="1">
    <location>
        <position position="305"/>
    </location>
    <ligand>
        <name>[4Fe-4S] cluster</name>
        <dbReference type="ChEBI" id="CHEBI:49883"/>
    </ligand>
</feature>
<feature type="binding site" evidence="1">
    <location>
        <position position="312"/>
    </location>
    <ligand>
        <name>[4Fe-4S] cluster</name>
        <dbReference type="ChEBI" id="CHEBI:49883"/>
    </ligand>
</feature>
<dbReference type="EC" id="1.17.7.3" evidence="1"/>
<dbReference type="EMBL" id="CP001157">
    <property type="protein sequence ID" value="ACO80165.1"/>
    <property type="molecule type" value="Genomic_DNA"/>
</dbReference>
<dbReference type="RefSeq" id="WP_012702540.1">
    <property type="nucleotide sequence ID" value="NC_012560.1"/>
</dbReference>
<dbReference type="SMR" id="C1DE57"/>
<dbReference type="STRING" id="322710.Avin_40290"/>
<dbReference type="EnsemblBacteria" id="ACO80165">
    <property type="protein sequence ID" value="ACO80165"/>
    <property type="gene ID" value="Avin_40290"/>
</dbReference>
<dbReference type="GeneID" id="88186972"/>
<dbReference type="KEGG" id="avn:Avin_40290"/>
<dbReference type="eggNOG" id="COG0821">
    <property type="taxonomic scope" value="Bacteria"/>
</dbReference>
<dbReference type="HOGENOM" id="CLU_042258_0_0_6"/>
<dbReference type="OrthoDB" id="9803214at2"/>
<dbReference type="UniPathway" id="UPA00056">
    <property type="reaction ID" value="UER00096"/>
</dbReference>
<dbReference type="Proteomes" id="UP000002424">
    <property type="component" value="Chromosome"/>
</dbReference>
<dbReference type="GO" id="GO:0051539">
    <property type="term" value="F:4 iron, 4 sulfur cluster binding"/>
    <property type="evidence" value="ECO:0007669"/>
    <property type="project" value="UniProtKB-UniRule"/>
</dbReference>
<dbReference type="GO" id="GO:0046429">
    <property type="term" value="F:4-hydroxy-3-methylbut-2-en-1-yl diphosphate synthase activity (ferredoxin)"/>
    <property type="evidence" value="ECO:0007669"/>
    <property type="project" value="UniProtKB-UniRule"/>
</dbReference>
<dbReference type="GO" id="GO:0141197">
    <property type="term" value="F:4-hydroxy-3-methylbut-2-enyl-diphosphate synthase activity (flavodoxin)"/>
    <property type="evidence" value="ECO:0007669"/>
    <property type="project" value="UniProtKB-EC"/>
</dbReference>
<dbReference type="GO" id="GO:0005506">
    <property type="term" value="F:iron ion binding"/>
    <property type="evidence" value="ECO:0007669"/>
    <property type="project" value="InterPro"/>
</dbReference>
<dbReference type="GO" id="GO:0019288">
    <property type="term" value="P:isopentenyl diphosphate biosynthetic process, methylerythritol 4-phosphate pathway"/>
    <property type="evidence" value="ECO:0007669"/>
    <property type="project" value="UniProtKB-UniRule"/>
</dbReference>
<dbReference type="GO" id="GO:0016114">
    <property type="term" value="P:terpenoid biosynthetic process"/>
    <property type="evidence" value="ECO:0007669"/>
    <property type="project" value="InterPro"/>
</dbReference>
<dbReference type="FunFam" id="3.20.20.20:FF:000001">
    <property type="entry name" value="4-hydroxy-3-methylbut-2-en-1-yl diphosphate synthase (flavodoxin)"/>
    <property type="match status" value="1"/>
</dbReference>
<dbReference type="Gene3D" id="3.20.20.20">
    <property type="entry name" value="Dihydropteroate synthase-like"/>
    <property type="match status" value="1"/>
</dbReference>
<dbReference type="Gene3D" id="3.30.413.10">
    <property type="entry name" value="Sulfite Reductase Hemoprotein, domain 1"/>
    <property type="match status" value="1"/>
</dbReference>
<dbReference type="HAMAP" id="MF_00159">
    <property type="entry name" value="IspG"/>
    <property type="match status" value="1"/>
</dbReference>
<dbReference type="InterPro" id="IPR011005">
    <property type="entry name" value="Dihydropteroate_synth-like_sf"/>
</dbReference>
<dbReference type="InterPro" id="IPR016425">
    <property type="entry name" value="IspG_bac"/>
</dbReference>
<dbReference type="InterPro" id="IPR004588">
    <property type="entry name" value="IspG_bac-typ"/>
</dbReference>
<dbReference type="InterPro" id="IPR045854">
    <property type="entry name" value="NO2/SO3_Rdtase_4Fe4S_sf"/>
</dbReference>
<dbReference type="NCBIfam" id="TIGR00612">
    <property type="entry name" value="ispG_gcpE"/>
    <property type="match status" value="1"/>
</dbReference>
<dbReference type="NCBIfam" id="NF001540">
    <property type="entry name" value="PRK00366.1"/>
    <property type="match status" value="1"/>
</dbReference>
<dbReference type="PANTHER" id="PTHR30454">
    <property type="entry name" value="4-HYDROXY-3-METHYLBUT-2-EN-1-YL DIPHOSPHATE SYNTHASE"/>
    <property type="match status" value="1"/>
</dbReference>
<dbReference type="PANTHER" id="PTHR30454:SF0">
    <property type="entry name" value="4-HYDROXY-3-METHYLBUT-2-EN-1-YL DIPHOSPHATE SYNTHASE (FERREDOXIN), CHLOROPLASTIC"/>
    <property type="match status" value="1"/>
</dbReference>
<dbReference type="Pfam" id="PF04551">
    <property type="entry name" value="GcpE"/>
    <property type="match status" value="1"/>
</dbReference>
<dbReference type="PIRSF" id="PIRSF004640">
    <property type="entry name" value="IspG"/>
    <property type="match status" value="1"/>
</dbReference>
<dbReference type="SUPFAM" id="SSF51395">
    <property type="entry name" value="FMN-linked oxidoreductases"/>
    <property type="match status" value="1"/>
</dbReference>
<dbReference type="SUPFAM" id="SSF56014">
    <property type="entry name" value="Nitrite and sulphite reductase 4Fe-4S domain-like"/>
    <property type="match status" value="1"/>
</dbReference>
<accession>C1DE57</accession>